<proteinExistence type="evidence at transcript level"/>
<evidence type="ECO:0000250" key="1">
    <source>
        <dbReference type="UniProtKB" id="O08738"/>
    </source>
</evidence>
<evidence type="ECO:0000250" key="2">
    <source>
        <dbReference type="UniProtKB" id="P55212"/>
    </source>
</evidence>
<evidence type="ECO:0000303" key="3">
    <source>
    </source>
</evidence>
<evidence type="ECO:0000305" key="4"/>
<evidence type="ECO:0000312" key="5">
    <source>
        <dbReference type="RGD" id="70967"/>
    </source>
</evidence>
<dbReference type="EC" id="3.4.22.59" evidence="2"/>
<dbReference type="EMBL" id="AF025670">
    <property type="protein sequence ID" value="AAC25433.1"/>
    <property type="molecule type" value="mRNA"/>
</dbReference>
<dbReference type="SMR" id="O35397"/>
<dbReference type="FunCoup" id="O35397">
    <property type="interactions" value="506"/>
</dbReference>
<dbReference type="STRING" id="10116.ENSRNOP00000013049"/>
<dbReference type="MEROPS" id="C14.005"/>
<dbReference type="PhosphoSitePlus" id="O35397"/>
<dbReference type="jPOST" id="O35397"/>
<dbReference type="PaxDb" id="10116-ENSRNOP00000013049"/>
<dbReference type="UCSC" id="RGD:70967">
    <property type="organism name" value="rat"/>
</dbReference>
<dbReference type="AGR" id="RGD:70967"/>
<dbReference type="RGD" id="70967">
    <property type="gene designation" value="Casp6"/>
</dbReference>
<dbReference type="eggNOG" id="KOG3573">
    <property type="taxonomic scope" value="Eukaryota"/>
</dbReference>
<dbReference type="InParanoid" id="O35397"/>
<dbReference type="PhylomeDB" id="O35397"/>
<dbReference type="Reactome" id="R-RNO-111465">
    <property type="pathway name" value="Apoptotic cleavage of cellular proteins"/>
</dbReference>
<dbReference type="Reactome" id="R-RNO-264870">
    <property type="pathway name" value="Caspase-mediated cleavage of cytoskeletal proteins"/>
</dbReference>
<dbReference type="Reactome" id="R-RNO-352238">
    <property type="pathway name" value="Breakdown of the nuclear lamina"/>
</dbReference>
<dbReference type="PRO" id="PR:O35397"/>
<dbReference type="Proteomes" id="UP000002494">
    <property type="component" value="Unplaced"/>
</dbReference>
<dbReference type="GO" id="GO:0030424">
    <property type="term" value="C:axon"/>
    <property type="evidence" value="ECO:0000314"/>
    <property type="project" value="RGD"/>
</dbReference>
<dbReference type="GO" id="GO:0005737">
    <property type="term" value="C:cytoplasm"/>
    <property type="evidence" value="ECO:0000266"/>
    <property type="project" value="RGD"/>
</dbReference>
<dbReference type="GO" id="GO:0005829">
    <property type="term" value="C:cytosol"/>
    <property type="evidence" value="ECO:0000266"/>
    <property type="project" value="RGD"/>
</dbReference>
<dbReference type="GO" id="GO:0043025">
    <property type="term" value="C:neuronal cell body"/>
    <property type="evidence" value="ECO:0000314"/>
    <property type="project" value="RGD"/>
</dbReference>
<dbReference type="GO" id="GO:0005634">
    <property type="term" value="C:nucleus"/>
    <property type="evidence" value="ECO:0000266"/>
    <property type="project" value="RGD"/>
</dbReference>
<dbReference type="GO" id="GO:0004197">
    <property type="term" value="F:cysteine-type endopeptidase activity"/>
    <property type="evidence" value="ECO:0000250"/>
    <property type="project" value="UniProtKB"/>
</dbReference>
<dbReference type="GO" id="GO:0004175">
    <property type="term" value="F:endopeptidase activity"/>
    <property type="evidence" value="ECO:0000314"/>
    <property type="project" value="RGD"/>
</dbReference>
<dbReference type="GO" id="GO:0042802">
    <property type="term" value="F:identical protein binding"/>
    <property type="evidence" value="ECO:0000266"/>
    <property type="project" value="RGD"/>
</dbReference>
<dbReference type="GO" id="GO:0002218">
    <property type="term" value="P:activation of innate immune response"/>
    <property type="evidence" value="ECO:0000250"/>
    <property type="project" value="UniProtKB"/>
</dbReference>
<dbReference type="GO" id="GO:0002525">
    <property type="term" value="P:acute inflammatory response to non-antigenic stimulus"/>
    <property type="evidence" value="ECO:0000314"/>
    <property type="project" value="RGD"/>
</dbReference>
<dbReference type="GO" id="GO:0006915">
    <property type="term" value="P:apoptotic process"/>
    <property type="evidence" value="ECO:0000318"/>
    <property type="project" value="GO_Central"/>
</dbReference>
<dbReference type="GO" id="GO:0007413">
    <property type="term" value="P:axonal fasciculation"/>
    <property type="evidence" value="ECO:0000315"/>
    <property type="project" value="RGD"/>
</dbReference>
<dbReference type="GO" id="GO:0072734">
    <property type="term" value="P:cellular response to staurosporine"/>
    <property type="evidence" value="ECO:0000266"/>
    <property type="project" value="RGD"/>
</dbReference>
<dbReference type="GO" id="GO:0030855">
    <property type="term" value="P:epithelial cell differentiation"/>
    <property type="evidence" value="ECO:0000266"/>
    <property type="project" value="RGD"/>
</dbReference>
<dbReference type="GO" id="GO:0097284">
    <property type="term" value="P:hepatocyte apoptotic process"/>
    <property type="evidence" value="ECO:0000250"/>
    <property type="project" value="UniProtKB"/>
</dbReference>
<dbReference type="GO" id="GO:0072332">
    <property type="term" value="P:intrinsic apoptotic signaling pathway by p53 class mediator"/>
    <property type="evidence" value="ECO:0000250"/>
    <property type="project" value="UniProtKB"/>
</dbReference>
<dbReference type="GO" id="GO:0002088">
    <property type="term" value="P:lens development in camera-type eye"/>
    <property type="evidence" value="ECO:0000270"/>
    <property type="project" value="RGD"/>
</dbReference>
<dbReference type="GO" id="GO:0043065">
    <property type="term" value="P:positive regulation of apoptotic process"/>
    <property type="evidence" value="ECO:0000315"/>
    <property type="project" value="RGD"/>
</dbReference>
<dbReference type="GO" id="GO:0060545">
    <property type="term" value="P:positive regulation of necroptotic process"/>
    <property type="evidence" value="ECO:0000250"/>
    <property type="project" value="UniProtKB"/>
</dbReference>
<dbReference type="GO" id="GO:0043525">
    <property type="term" value="P:positive regulation of neuron apoptotic process"/>
    <property type="evidence" value="ECO:0000315"/>
    <property type="project" value="RGD"/>
</dbReference>
<dbReference type="GO" id="GO:0046670">
    <property type="term" value="P:positive regulation of retinal cell programmed cell death"/>
    <property type="evidence" value="ECO:0000315"/>
    <property type="project" value="RGD"/>
</dbReference>
<dbReference type="GO" id="GO:0016540">
    <property type="term" value="P:protein autoprocessing"/>
    <property type="evidence" value="ECO:0000250"/>
    <property type="project" value="UniProtKB"/>
</dbReference>
<dbReference type="GO" id="GO:0006508">
    <property type="term" value="P:proteolysis"/>
    <property type="evidence" value="ECO:0000266"/>
    <property type="project" value="RGD"/>
</dbReference>
<dbReference type="GO" id="GO:0070269">
    <property type="term" value="P:pyroptotic inflammatory response"/>
    <property type="evidence" value="ECO:0000250"/>
    <property type="project" value="UniProtKB"/>
</dbReference>
<dbReference type="GO" id="GO:0043067">
    <property type="term" value="P:regulation of programmed cell death"/>
    <property type="evidence" value="ECO:0000266"/>
    <property type="project" value="RGD"/>
</dbReference>
<dbReference type="GO" id="GO:0034097">
    <property type="term" value="P:response to cytokine"/>
    <property type="evidence" value="ECO:0000314"/>
    <property type="project" value="RGD"/>
</dbReference>
<dbReference type="GO" id="GO:0032355">
    <property type="term" value="P:response to estradiol"/>
    <property type="evidence" value="ECO:0000270"/>
    <property type="project" value="RGD"/>
</dbReference>
<dbReference type="GO" id="GO:0010332">
    <property type="term" value="P:response to gamma radiation"/>
    <property type="evidence" value="ECO:0000270"/>
    <property type="project" value="RGD"/>
</dbReference>
<dbReference type="GO" id="GO:0009749">
    <property type="term" value="P:response to glucose"/>
    <property type="evidence" value="ECO:0000315"/>
    <property type="project" value="RGD"/>
</dbReference>
<dbReference type="GO" id="GO:0042542">
    <property type="term" value="P:response to hydrogen peroxide"/>
    <property type="evidence" value="ECO:0000314"/>
    <property type="project" value="RGD"/>
</dbReference>
<dbReference type="GO" id="GO:0010039">
    <property type="term" value="P:response to iron ion"/>
    <property type="evidence" value="ECO:0000315"/>
    <property type="project" value="RGD"/>
</dbReference>
<dbReference type="GO" id="GO:0010038">
    <property type="term" value="P:response to metal ion"/>
    <property type="evidence" value="ECO:0000270"/>
    <property type="project" value="RGD"/>
</dbReference>
<dbReference type="GO" id="GO:0033574">
    <property type="term" value="P:response to testosterone"/>
    <property type="evidence" value="ECO:0000270"/>
    <property type="project" value="RGD"/>
</dbReference>
<dbReference type="GO" id="GO:0009636">
    <property type="term" value="P:response to toxic substance"/>
    <property type="evidence" value="ECO:0000270"/>
    <property type="project" value="RGD"/>
</dbReference>
<dbReference type="CDD" id="cd00032">
    <property type="entry name" value="CASc"/>
    <property type="match status" value="1"/>
</dbReference>
<dbReference type="FunFam" id="3.40.50.1460:FF:000001">
    <property type="entry name" value="Caspase-3 preproprotein"/>
    <property type="match status" value="1"/>
</dbReference>
<dbReference type="Gene3D" id="3.40.50.1460">
    <property type="match status" value="1"/>
</dbReference>
<dbReference type="InterPro" id="IPR029030">
    <property type="entry name" value="Caspase-like_dom_sf"/>
</dbReference>
<dbReference type="InterPro" id="IPR033139">
    <property type="entry name" value="Caspase_cys_AS"/>
</dbReference>
<dbReference type="InterPro" id="IPR016129">
    <property type="entry name" value="Caspase_his_AS"/>
</dbReference>
<dbReference type="InterPro" id="IPR002398">
    <property type="entry name" value="Pept_C14"/>
</dbReference>
<dbReference type="InterPro" id="IPR011600">
    <property type="entry name" value="Pept_C14_caspase"/>
</dbReference>
<dbReference type="InterPro" id="IPR002138">
    <property type="entry name" value="Pept_C14_p10"/>
</dbReference>
<dbReference type="InterPro" id="IPR001309">
    <property type="entry name" value="Pept_C14_p20"/>
</dbReference>
<dbReference type="InterPro" id="IPR015917">
    <property type="entry name" value="Pept_C14A"/>
</dbReference>
<dbReference type="PANTHER" id="PTHR10454">
    <property type="entry name" value="CASPASE"/>
    <property type="match status" value="1"/>
</dbReference>
<dbReference type="PANTHER" id="PTHR10454:SF206">
    <property type="entry name" value="CASPASE-6"/>
    <property type="match status" value="1"/>
</dbReference>
<dbReference type="Pfam" id="PF00656">
    <property type="entry name" value="Peptidase_C14"/>
    <property type="match status" value="1"/>
</dbReference>
<dbReference type="PRINTS" id="PR00376">
    <property type="entry name" value="IL1BCENZYME"/>
</dbReference>
<dbReference type="SMART" id="SM00115">
    <property type="entry name" value="CASc"/>
    <property type="match status" value="1"/>
</dbReference>
<dbReference type="SUPFAM" id="SSF52129">
    <property type="entry name" value="Caspase-like"/>
    <property type="match status" value="1"/>
</dbReference>
<dbReference type="PROSITE" id="PS01122">
    <property type="entry name" value="CASPASE_CYS"/>
    <property type="match status" value="1"/>
</dbReference>
<dbReference type="PROSITE" id="PS01121">
    <property type="entry name" value="CASPASE_HIS"/>
    <property type="match status" value="1"/>
</dbReference>
<dbReference type="PROSITE" id="PS50207">
    <property type="entry name" value="CASPASE_P10"/>
    <property type="match status" value="1"/>
</dbReference>
<dbReference type="PROSITE" id="PS50208">
    <property type="entry name" value="CASPASE_P20"/>
    <property type="match status" value="1"/>
</dbReference>
<organism>
    <name type="scientific">Rattus norvegicus</name>
    <name type="common">Rat</name>
    <dbReference type="NCBI Taxonomy" id="10116"/>
    <lineage>
        <taxon>Eukaryota</taxon>
        <taxon>Metazoa</taxon>
        <taxon>Chordata</taxon>
        <taxon>Craniata</taxon>
        <taxon>Vertebrata</taxon>
        <taxon>Euteleostomi</taxon>
        <taxon>Mammalia</taxon>
        <taxon>Eutheria</taxon>
        <taxon>Euarchontoglires</taxon>
        <taxon>Glires</taxon>
        <taxon>Rodentia</taxon>
        <taxon>Myomorpha</taxon>
        <taxon>Muroidea</taxon>
        <taxon>Muridae</taxon>
        <taxon>Murinae</taxon>
        <taxon>Rattus</taxon>
    </lineage>
</organism>
<accession>O35397</accession>
<name>CASP6_RAT</name>
<reference key="1">
    <citation type="journal article" date="1998" name="Am. J. Physiol.">
        <title>Identification of gene family of caspases in rat kidney and altered expression in ischemia-reperfusion injury.</title>
        <authorList>
            <person name="Kaushal G.P."/>
            <person name="Singh A.B."/>
            <person name="Shah S.V."/>
        </authorList>
    </citation>
    <scope>NUCLEOTIDE SEQUENCE [MRNA]</scope>
    <source>
        <strain>Sprague-Dawley</strain>
        <tissue>Kidney cortex</tissue>
    </source>
</reference>
<comment type="function">
    <text evidence="1 2">Cysteine protease that plays essential roles in programmed cell death, axonal degeneration, development and innate immunity (By similarity). Acts as a non-canonical executioner caspase during apoptosis: localizes in the nucleus and cleaves the nuclear structural protein NUMA1 and lamin A/LMNA thereby inducing nuclear shrinkage and fragmentation. Lamin-A/LMNA cleavage is required for chromatin condensation and nuclear disassembly during apoptotic execution (By similarity). Acts as a regulator of liver damage by promoting hepatocyte apoptosis: in absence of phosphorylation by AMP-activated protein kinase (AMPK), catalyzes cleavage of BID, leading to cytochrome c release, thereby participating in nonalcoholic steatohepatitis. Cleaves PARK7/DJ-1 in cells undergoing apoptosis (By similarity). Involved in intrinsic apoptosis by mediating cleavage of RIPK1. Furthermore, cleaves many transcription factors such as NF-kappa-B and cAMP response element-binding protein/CREBBP (By similarity). Cleaves phospholipid scramblase proteins XKR4 and XKR9. In addition to apoptosis, involved in different forms of programmed cell death. Plays an essential role in defense against viruses by acting as a central mediator of the ZBP1-mediated pyroptosis, apoptosis, and necroptosis (PANoptosis), independently of its cysteine protease activity. PANoptosis is a unique inflammatory programmed cell death, which provides a molecular scaffold that allows the interactions and activation of machinery required for inflammasome/pyroptosis, apoptosis and necroptosis. Mechanistically, interacts with RIPK3 and enhances the interaction between RIPK3 and ZBP1, leading to ZBP1-mediated inflammasome activation and cell death. Plays an essential role in axon degeneration during axon pruning which is the remodeling of axons during neurogenesis but not apoptosis. Regulates B-cell programs both during early development and after antigen stimulation (By similarity).</text>
</comment>
<comment type="catalytic activity">
    <reaction evidence="2">
        <text>Strict requirement for Asp at position P1 and has a preferred cleavage sequence of Val-Glu-His-Asp-|-.</text>
        <dbReference type="EC" id="3.4.22.59"/>
    </reaction>
</comment>
<comment type="activity regulation">
    <text evidence="2">During activation, the N-terminal disordered prodomain is removed by cleavage. Concomitantly, double cleavage gives rise to a large 18-kDa and a small 11-kDa subunit. The two large and two small subunits then assemble to form the active CASP6 complex. Can be cleaved and activated by different caspases, depending on the context. Cleaved and activated by caspase-8 (CASP8) and subsequently by caspase-3 (CASP3). Can also undergo autoactivation by mediating autocleavage at Asp-162 and Asp-176, while it is not able to cleave its N-terminal disordered prodomain. Intramolecular cleavage at Asp-176 is a prerequisite for CASP6 self-activation. Cleaved and activated by CASP1 in neurons, possibly in the context of inflammation. Phosphorylation at Ser-240 inhibits autocleavage, preventing caspase activation.</text>
</comment>
<comment type="subunit">
    <text evidence="2">Heterotetramer that consists of two anti-parallel arranged heterodimers, each one formed by a 18 kDa (p18) and a 11 kDa (p11) subunits. Interacts with BIRC6/bruce. Interacts with RIPK3.</text>
</comment>
<comment type="subunit">
    <molecule>Caspase-6 subunit p18</molecule>
    <text evidence="2">Heterotetramer that consists of two anti-parallel arranged heterodimers, each one formed by a 18 kDa (Caspase-6 subunit p18) and a 11 kDa (Caspase-6 subunit p11) subunit.</text>
</comment>
<comment type="subunit">
    <molecule>Caspase-6 subunit p11</molecule>
    <text evidence="2">Heterotetramer that consists of two anti-parallel arranged heterodimers, each one formed by a 18 kDa (Caspase-6 subunit p18) and a 11 kDa (Caspase-6 subunit p11) subunit.</text>
</comment>
<comment type="subcellular location">
    <subcellularLocation>
        <location evidence="2">Cytoplasm</location>
    </subcellularLocation>
    <subcellularLocation>
        <location evidence="2">Nucleus</location>
    </subcellularLocation>
</comment>
<comment type="domain">
    <text evidence="2">The N-terminal disordered prodomain is required to prevent self-activation.</text>
</comment>
<comment type="domain">
    <text evidence="2">The Tri-arginine exosite is required to recruit substrates for hydrolysis.</text>
</comment>
<comment type="domain">
    <text evidence="2">Undergoes helix-strand structural transitions upon substrate-binding: the 130's region interconverts between an inactive helical state and the canonically active strand state. Other caspases rest constitutively in the strand conformation before and after substrate-binding.</text>
</comment>
<comment type="PTM">
    <text evidence="2">Phosphorylated by NUAK1; phosphorylation inhibits self-activation. Phosphorylation at Ser-240 by AMP-activated protein kinase (PRKAA1 or PRKAA2) inhibits autocleavage, preventing caspase activation, thereby preventing hepatocyte apoptosis.</text>
</comment>
<comment type="PTM">
    <text evidence="2">Palmitoylation by ZDHHC17 blocks dimerization and subsequent activation, leading to inhibit the cysteine protease activity.</text>
</comment>
<comment type="PTM">
    <text evidence="2">Can be cleaved and activated by different caspases, depending on the context. Cleaved and activated by caspase-8 (CASP8) and subsequently by caspase-3 (CASP3). Can also undergo autoactivation by mediating autocleavage at Asp-162 and Asp-176, while it is not able to cleave its N-terminal disordered prodomain. Cleaved and activated by CASP1, possibly in the context of inflammation.</text>
</comment>
<comment type="similarity">
    <text evidence="4">Belongs to the peptidase C14A family.</text>
</comment>
<gene>
    <name evidence="5" type="primary">Casp6</name>
    <name evidence="3" type="synonym">Mch2</name>
</gene>
<sequence>MTETDGFYRSREVLDPAEQYKMDHKRRGTALIFNHERFFWHLALPERRGTNADRDNPTRRFSELGFEVKCFNDLRAEELLLKIHEVSTSSHVDADCFLCVFLSHGEGNHIYAYDAKIEIQTLTGLFKGDKCQSLVGKPKIFIIQACRGSQHDVPLVPLDVVDHQTDKLDDNVTQVDAASVYTLPAGADFLMCYSVAEGYYSHRETVNGSWYIQDLSEMLARHGSSLEFTELLTLVNRKVSQRRVDFCKDPGAIGKKQVPCFASMLTKKLHFCPKPSK</sequence>
<keyword id="KW-0053">Apoptosis</keyword>
<keyword id="KW-0068">Autocatalytic cleavage</keyword>
<keyword id="KW-0963">Cytoplasm</keyword>
<keyword id="KW-0378">Hydrolase</keyword>
<keyword id="KW-0449">Lipoprotein</keyword>
<keyword id="KW-0539">Nucleus</keyword>
<keyword id="KW-0564">Palmitate</keyword>
<keyword id="KW-0597">Phosphoprotein</keyword>
<keyword id="KW-0645">Protease</keyword>
<keyword id="KW-1185">Reference proteome</keyword>
<keyword id="KW-0788">Thiol protease</keyword>
<keyword id="KW-0865">Zymogen</keyword>
<feature type="propeptide" id="PRO_0000233177" evidence="2">
    <location>
        <begin position="1"/>
        <end position="5"/>
    </location>
</feature>
<feature type="chain" id="PRO_0000233178" description="Caspase-6 subunit p18" evidence="2">
    <location>
        <begin position="6"/>
        <end position="162"/>
    </location>
</feature>
<feature type="propeptide" id="PRO_0000233179" evidence="2">
    <location>
        <begin position="163"/>
        <end position="176"/>
    </location>
</feature>
<feature type="chain" id="PRO_0000233180" description="Caspase-6 subunit p11" evidence="2">
    <location>
        <begin position="177"/>
        <end position="277"/>
    </location>
</feature>
<feature type="region of interest" description="Tri-arginine exosite" evidence="2">
    <location>
        <begin position="25"/>
        <end position="27"/>
    </location>
</feature>
<feature type="region of interest" description="130's region" evidence="2">
    <location>
        <begin position="108"/>
        <end position="125"/>
    </location>
</feature>
<feature type="active site" evidence="2">
    <location>
        <position position="104"/>
    </location>
</feature>
<feature type="active site" evidence="2">
    <location>
        <position position="146"/>
    </location>
</feature>
<feature type="modified residue" description="Phosphoserine" evidence="1">
    <location>
        <position position="62"/>
    </location>
</feature>
<feature type="modified residue" description="Phosphoserine" evidence="2">
    <location>
        <position position="240"/>
    </location>
</feature>
<feature type="lipid moiety-binding region" description="S-palmitoyl cysteine" evidence="2">
    <location>
        <position position="247"/>
    </location>
</feature>
<feature type="lipid moiety-binding region" description="S-palmitoyl cysteine" evidence="2">
    <location>
        <position position="260"/>
    </location>
</feature>
<protein>
    <recommendedName>
        <fullName evidence="4">Caspase-6</fullName>
        <shortName>CASP-6</shortName>
        <ecNumber evidence="2">3.4.22.59</ecNumber>
    </recommendedName>
    <alternativeName>
        <fullName evidence="3">Apoptotic protease Mch-2</fullName>
    </alternativeName>
    <component>
        <recommendedName>
            <fullName evidence="2">Caspase-6 subunit p18</fullName>
        </recommendedName>
    </component>
    <component>
        <recommendedName>
            <fullName evidence="2">Caspase-6 subunit p11</fullName>
        </recommendedName>
    </component>
</protein>